<accession>B7LE21</accession>
<keyword id="KW-0106">Calcium</keyword>
<keyword id="KW-0131">Cell cycle</keyword>
<keyword id="KW-0132">Cell division</keyword>
<keyword id="KW-0159">Chromosome partition</keyword>
<keyword id="KW-0963">Cytoplasm</keyword>
<keyword id="KW-0226">DNA condensation</keyword>
<keyword id="KW-1185">Reference proteome</keyword>
<gene>
    <name evidence="1" type="primary">mukF</name>
    <name type="ordered locus">EC55989_0968</name>
</gene>
<evidence type="ECO:0000255" key="1">
    <source>
        <dbReference type="HAMAP-Rule" id="MF_01803"/>
    </source>
</evidence>
<proteinExistence type="inferred from homology"/>
<organism>
    <name type="scientific">Escherichia coli (strain 55989 / EAEC)</name>
    <dbReference type="NCBI Taxonomy" id="585055"/>
    <lineage>
        <taxon>Bacteria</taxon>
        <taxon>Pseudomonadati</taxon>
        <taxon>Pseudomonadota</taxon>
        <taxon>Gammaproteobacteria</taxon>
        <taxon>Enterobacterales</taxon>
        <taxon>Enterobacteriaceae</taxon>
        <taxon>Escherichia</taxon>
    </lineage>
</organism>
<dbReference type="EMBL" id="CU928145">
    <property type="protein sequence ID" value="CAU96832.1"/>
    <property type="molecule type" value="Genomic_DNA"/>
</dbReference>
<dbReference type="RefSeq" id="WP_001288850.1">
    <property type="nucleotide sequence ID" value="NC_011748.1"/>
</dbReference>
<dbReference type="SMR" id="B7LE21"/>
<dbReference type="GeneID" id="93776493"/>
<dbReference type="KEGG" id="eck:EC55989_0968"/>
<dbReference type="HOGENOM" id="CLU_049853_0_0_6"/>
<dbReference type="Proteomes" id="UP000000746">
    <property type="component" value="Chromosome"/>
</dbReference>
<dbReference type="GO" id="GO:0005737">
    <property type="term" value="C:cytoplasm"/>
    <property type="evidence" value="ECO:0007669"/>
    <property type="project" value="UniProtKB-UniRule"/>
</dbReference>
<dbReference type="GO" id="GO:0009295">
    <property type="term" value="C:nucleoid"/>
    <property type="evidence" value="ECO:0007669"/>
    <property type="project" value="UniProtKB-SubCell"/>
</dbReference>
<dbReference type="GO" id="GO:0005509">
    <property type="term" value="F:calcium ion binding"/>
    <property type="evidence" value="ECO:0007669"/>
    <property type="project" value="UniProtKB-UniRule"/>
</dbReference>
<dbReference type="GO" id="GO:0051301">
    <property type="term" value="P:cell division"/>
    <property type="evidence" value="ECO:0007669"/>
    <property type="project" value="UniProtKB-KW"/>
</dbReference>
<dbReference type="GO" id="GO:0030261">
    <property type="term" value="P:chromosome condensation"/>
    <property type="evidence" value="ECO:0007669"/>
    <property type="project" value="UniProtKB-KW"/>
</dbReference>
<dbReference type="GO" id="GO:0007059">
    <property type="term" value="P:chromosome segregation"/>
    <property type="evidence" value="ECO:0007669"/>
    <property type="project" value="UniProtKB-UniRule"/>
</dbReference>
<dbReference type="GO" id="GO:0006260">
    <property type="term" value="P:DNA replication"/>
    <property type="evidence" value="ECO:0007669"/>
    <property type="project" value="UniProtKB-UniRule"/>
</dbReference>
<dbReference type="CDD" id="cd16337">
    <property type="entry name" value="MukF_C"/>
    <property type="match status" value="1"/>
</dbReference>
<dbReference type="CDD" id="cd16335">
    <property type="entry name" value="MukF_N"/>
    <property type="match status" value="1"/>
</dbReference>
<dbReference type="Gene3D" id="1.20.58.590">
    <property type="entry name" value="Chromosome partition protein MukF, middle domain"/>
    <property type="match status" value="1"/>
</dbReference>
<dbReference type="Gene3D" id="1.10.225.40">
    <property type="entry name" value="MukF, C-terminal domain"/>
    <property type="match status" value="1"/>
</dbReference>
<dbReference type="Gene3D" id="1.10.10.10">
    <property type="entry name" value="Winged helix-like DNA-binding domain superfamily/Winged helix DNA-binding domain"/>
    <property type="match status" value="1"/>
</dbReference>
<dbReference type="HAMAP" id="MF_01803">
    <property type="entry name" value="MukF"/>
    <property type="match status" value="1"/>
</dbReference>
<dbReference type="InterPro" id="IPR005582">
    <property type="entry name" value="Chromosome_partition_MukF"/>
</dbReference>
<dbReference type="InterPro" id="IPR033441">
    <property type="entry name" value="MukF_C"/>
</dbReference>
<dbReference type="InterPro" id="IPR038198">
    <property type="entry name" value="MukF_C_sf"/>
</dbReference>
<dbReference type="InterPro" id="IPR033440">
    <property type="entry name" value="MukF_M"/>
</dbReference>
<dbReference type="InterPro" id="IPR036141">
    <property type="entry name" value="MukF_M_sp"/>
</dbReference>
<dbReference type="InterPro" id="IPR033439">
    <property type="entry name" value="MukF_WHTH"/>
</dbReference>
<dbReference type="InterPro" id="IPR036388">
    <property type="entry name" value="WH-like_DNA-bd_sf"/>
</dbReference>
<dbReference type="InterPro" id="IPR036390">
    <property type="entry name" value="WH_DNA-bd_sf"/>
</dbReference>
<dbReference type="NCBIfam" id="NF003615">
    <property type="entry name" value="PRK05260.1"/>
    <property type="match status" value="1"/>
</dbReference>
<dbReference type="Pfam" id="PF03882">
    <property type="entry name" value="KicB"/>
    <property type="match status" value="1"/>
</dbReference>
<dbReference type="Pfam" id="PF17193">
    <property type="entry name" value="MukF_C"/>
    <property type="match status" value="1"/>
</dbReference>
<dbReference type="Pfam" id="PF17192">
    <property type="entry name" value="MukF_M"/>
    <property type="match status" value="1"/>
</dbReference>
<dbReference type="PIRSF" id="PIRSF018282">
    <property type="entry name" value="MukF"/>
    <property type="match status" value="1"/>
</dbReference>
<dbReference type="SUPFAM" id="SSF140570">
    <property type="entry name" value="MukF C-terminal domain-like"/>
    <property type="match status" value="1"/>
</dbReference>
<dbReference type="SUPFAM" id="SSF46785">
    <property type="entry name" value="Winged helix' DNA-binding domain"/>
    <property type="match status" value="1"/>
</dbReference>
<name>MUKF_ECO55</name>
<feature type="chain" id="PRO_1000187500" description="Chromosome partition protein MukF">
    <location>
        <begin position="1"/>
        <end position="440"/>
    </location>
</feature>
<feature type="region of interest" description="Leucine-zipper">
    <location>
        <begin position="208"/>
        <end position="236"/>
    </location>
</feature>
<comment type="function">
    <text evidence="1">Involved in chromosome condensation, segregation and cell cycle progression. May participate in facilitating chromosome segregation by condensation DNA from both sides of a centrally located replisome during cell division. Not required for mini-F plasmid partitioning. Probably acts via its interaction with MukB and MukE. Overexpression results in anucleate cells. It has a calcium binding activity.</text>
</comment>
<comment type="subunit">
    <text evidence="1">Interacts, and probably forms a ternary complex, with MukE and MukB via its C-terminal region. The complex formation is stimulated by calcium or magnesium. It is required for an interaction between MukE and MukB.</text>
</comment>
<comment type="subcellular location">
    <subcellularLocation>
        <location evidence="1">Cytoplasm</location>
        <location evidence="1">Nucleoid</location>
    </subcellularLocation>
    <text evidence="1">Restricted to the nucleoid region.</text>
</comment>
<comment type="similarity">
    <text evidence="1">Belongs to the MukF family.</text>
</comment>
<sequence>MSEFSQTVPELVAWARKNDFSISLPVDRLSFLLAVATLNGERLDGEMSEGELVDAFRHVSDAFEQTSETIGVRANNAINDMVRQRLLNRFTSEQAEGNAIYRLTPLGIGITDYYIRQREFSTLRLSMQLSIVAGELKRAADAAEEGGDEFHWHRNVYAPLKYSVAEIFDSIDLTQRLMDEQQQQVKDDIAQLLNKDWRAAISSCELLLSETSGTLRELQDTLEAAGDKLQANLLRIQDATMTHDDLHFVDRLVFDLQSKLDRIISWGQQSIDLWIGYDRHVHKFIRTAIDMDKNRVFAQRLRQSVQTYFDEPWALTYANADRLLDMRDEEMALRDEEVTGELPEDLEYEEFNEIREQLAAIIEEQLAVYKTRQVPLDLGLVVREYLSQYPRARHFDVARIVIDQAVRLGVAQADFTGLPAKWQPINDYGAKVQAHVIDKY</sequence>
<reference key="1">
    <citation type="journal article" date="2009" name="PLoS Genet.">
        <title>Organised genome dynamics in the Escherichia coli species results in highly diverse adaptive paths.</title>
        <authorList>
            <person name="Touchon M."/>
            <person name="Hoede C."/>
            <person name="Tenaillon O."/>
            <person name="Barbe V."/>
            <person name="Baeriswyl S."/>
            <person name="Bidet P."/>
            <person name="Bingen E."/>
            <person name="Bonacorsi S."/>
            <person name="Bouchier C."/>
            <person name="Bouvet O."/>
            <person name="Calteau A."/>
            <person name="Chiapello H."/>
            <person name="Clermont O."/>
            <person name="Cruveiller S."/>
            <person name="Danchin A."/>
            <person name="Diard M."/>
            <person name="Dossat C."/>
            <person name="Karoui M.E."/>
            <person name="Frapy E."/>
            <person name="Garry L."/>
            <person name="Ghigo J.M."/>
            <person name="Gilles A.M."/>
            <person name="Johnson J."/>
            <person name="Le Bouguenec C."/>
            <person name="Lescat M."/>
            <person name="Mangenot S."/>
            <person name="Martinez-Jehanne V."/>
            <person name="Matic I."/>
            <person name="Nassif X."/>
            <person name="Oztas S."/>
            <person name="Petit M.A."/>
            <person name="Pichon C."/>
            <person name="Rouy Z."/>
            <person name="Ruf C.S."/>
            <person name="Schneider D."/>
            <person name="Tourret J."/>
            <person name="Vacherie B."/>
            <person name="Vallenet D."/>
            <person name="Medigue C."/>
            <person name="Rocha E.P.C."/>
            <person name="Denamur E."/>
        </authorList>
    </citation>
    <scope>NUCLEOTIDE SEQUENCE [LARGE SCALE GENOMIC DNA]</scope>
    <source>
        <strain>55989 / EAEC</strain>
    </source>
</reference>
<protein>
    <recommendedName>
        <fullName evidence="1">Chromosome partition protein MukF</fullName>
    </recommendedName>
</protein>